<reference key="1">
    <citation type="journal article" date="2003" name="PLoS Biol.">
        <title>The genome sequence of Caenorhabditis briggsae: a platform for comparative genomics.</title>
        <authorList>
            <person name="Stein L.D."/>
            <person name="Bao Z."/>
            <person name="Blasiar D."/>
            <person name="Blumenthal T."/>
            <person name="Brent M.R."/>
            <person name="Chen N."/>
            <person name="Chinwalla A."/>
            <person name="Clarke L."/>
            <person name="Clee C."/>
            <person name="Coghlan A."/>
            <person name="Coulson A."/>
            <person name="D'Eustachio P."/>
            <person name="Fitch D.H.A."/>
            <person name="Fulton L.A."/>
            <person name="Fulton R.E."/>
            <person name="Griffiths-Jones S."/>
            <person name="Harris T.W."/>
            <person name="Hillier L.W."/>
            <person name="Kamath R."/>
            <person name="Kuwabara P.E."/>
            <person name="Mardis E.R."/>
            <person name="Marra M.A."/>
            <person name="Miner T.L."/>
            <person name="Minx P."/>
            <person name="Mullikin J.C."/>
            <person name="Plumb R.W."/>
            <person name="Rogers J."/>
            <person name="Schein J.E."/>
            <person name="Sohrmann M."/>
            <person name="Spieth J."/>
            <person name="Stajich J.E."/>
            <person name="Wei C."/>
            <person name="Willey D."/>
            <person name="Wilson R.K."/>
            <person name="Durbin R.M."/>
            <person name="Waterston R.H."/>
        </authorList>
    </citation>
    <scope>NUCLEOTIDE SEQUENCE [LARGE SCALE GENOMIC DNA]</scope>
    <source>
        <strain>AF16</strain>
    </source>
</reference>
<reference evidence="5" key="2">
    <citation type="journal article" date="1999" name="Gene">
        <title>Identification and characterization of a serine hydroxymethyltransferase isoform in Caenorhabditis briggsae.</title>
        <authorList>
            <person name="Vatcher G.P."/>
            <person name="Barbazuk W.B."/>
            <person name="O'Neil N.J."/>
            <person name="Marra M.A."/>
            <person name="Ha T."/>
            <person name="Baillie D.L."/>
        </authorList>
    </citation>
    <scope>IDENTIFICATION</scope>
</reference>
<sequence>MFARAVSRKTMTGLLAGSRVLLASQFTMADRQVHTPLEPVQRQKYANNENLLKDHVEKIDPEVFNIMKNEKSRQRRGLELIASENFTSKAVMDALGSAMCNKYSEGYPGARYYGGNEFIDQMEILCQKRALEVFGLDPAKWGVNVQSLSGSPANFAVYTALVGANGRIMGLDLPDGGHLTHGFFTPARKVSATSEFFQSMPYKVDAQSGLIDYDKLEENAMLFRPKVLIAGVSCYARHLDYERFRKIATKAGAYLMSDMAHISGLVAAGLIPSPFEYSDVVTTTTHKSLRGPRGAMIFYRKGVRSVNAKGVETLYDLEEKINSAVFPGLQGGPHNHTIAGIAVALKQCLSEDFVQYGEQILKNAKTLAERLKKHGYSLATGGTDNHLLLVDLRPIGVEGARAEHILDLAHIACNKNTCPGDVSALRPGGIRLGTPALTSRGFKEQDFEKVGDFIHEGVQIAKKYNAEAGKTLKDFKAFTATNEQFKQEVAELAKRVEEFSGKFEIPGNDLF</sequence>
<evidence type="ECO:0000250" key="1"/>
<evidence type="ECO:0000250" key="2">
    <source>
        <dbReference type="UniProtKB" id="P35623"/>
    </source>
</evidence>
<evidence type="ECO:0000250" key="3">
    <source>
        <dbReference type="UniProtKB" id="P50432"/>
    </source>
</evidence>
<evidence type="ECO:0000255" key="4"/>
<evidence type="ECO:0000305" key="5"/>
<dbReference type="EC" id="2.1.2.1"/>
<dbReference type="EMBL" id="HE600934">
    <property type="protein sequence ID" value="CAP36877.2"/>
    <property type="molecule type" value="Genomic_DNA"/>
</dbReference>
<dbReference type="SMR" id="Q60V73"/>
<dbReference type="FunCoup" id="Q60V73">
    <property type="interactions" value="1748"/>
</dbReference>
<dbReference type="STRING" id="6238.Q60V73"/>
<dbReference type="EnsemblMetazoa" id="CBG19673.1">
    <property type="protein sequence ID" value="CBG19673.1"/>
    <property type="gene ID" value="WBGene00038848"/>
</dbReference>
<dbReference type="WormBase" id="CBG19673">
    <property type="protein sequence ID" value="CBP36659"/>
    <property type="gene ID" value="WBGene00038848"/>
    <property type="gene designation" value="Cbr-mel-32"/>
</dbReference>
<dbReference type="eggNOG" id="KOG2467">
    <property type="taxonomic scope" value="Eukaryota"/>
</dbReference>
<dbReference type="HOGENOM" id="CLU_022477_0_1_1"/>
<dbReference type="InParanoid" id="Q60V73"/>
<dbReference type="OMA" id="CQFANVQ"/>
<dbReference type="OrthoDB" id="10265628at2759"/>
<dbReference type="UniPathway" id="UPA00193"/>
<dbReference type="Proteomes" id="UP000008549">
    <property type="component" value="Unassembled WGS sequence"/>
</dbReference>
<dbReference type="GO" id="GO:0005737">
    <property type="term" value="C:cytoplasm"/>
    <property type="evidence" value="ECO:0000318"/>
    <property type="project" value="GO_Central"/>
</dbReference>
<dbReference type="GO" id="GO:0005739">
    <property type="term" value="C:mitochondrion"/>
    <property type="evidence" value="ECO:0000318"/>
    <property type="project" value="GO_Central"/>
</dbReference>
<dbReference type="GO" id="GO:0005634">
    <property type="term" value="C:nucleus"/>
    <property type="evidence" value="ECO:0000318"/>
    <property type="project" value="GO_Central"/>
</dbReference>
<dbReference type="GO" id="GO:0004372">
    <property type="term" value="F:glycine hydroxymethyltransferase activity"/>
    <property type="evidence" value="ECO:0000318"/>
    <property type="project" value="GO_Central"/>
</dbReference>
<dbReference type="GO" id="GO:0030170">
    <property type="term" value="F:pyridoxal phosphate binding"/>
    <property type="evidence" value="ECO:0000318"/>
    <property type="project" value="GO_Central"/>
</dbReference>
<dbReference type="GO" id="GO:0009792">
    <property type="term" value="P:embryo development ending in birth or egg hatching"/>
    <property type="evidence" value="ECO:0007669"/>
    <property type="project" value="EnsemblMetazoa"/>
</dbReference>
<dbReference type="GO" id="GO:0019264">
    <property type="term" value="P:glycine biosynthetic process from serine"/>
    <property type="evidence" value="ECO:0000318"/>
    <property type="project" value="GO_Central"/>
</dbReference>
<dbReference type="GO" id="GO:0035999">
    <property type="term" value="P:tetrahydrofolate interconversion"/>
    <property type="evidence" value="ECO:0007669"/>
    <property type="project" value="UniProtKB-UniPathway"/>
</dbReference>
<dbReference type="GO" id="GO:0046653">
    <property type="term" value="P:tetrahydrofolate metabolic process"/>
    <property type="evidence" value="ECO:0000318"/>
    <property type="project" value="GO_Central"/>
</dbReference>
<dbReference type="CDD" id="cd00378">
    <property type="entry name" value="SHMT"/>
    <property type="match status" value="1"/>
</dbReference>
<dbReference type="FunFam" id="3.40.640.10:FF:000097">
    <property type="entry name" value="Serine hydroxymethyltransferase"/>
    <property type="match status" value="1"/>
</dbReference>
<dbReference type="Gene3D" id="3.90.1150.10">
    <property type="entry name" value="Aspartate Aminotransferase, domain 1"/>
    <property type="match status" value="1"/>
</dbReference>
<dbReference type="Gene3D" id="3.40.640.10">
    <property type="entry name" value="Type I PLP-dependent aspartate aminotransferase-like (Major domain)"/>
    <property type="match status" value="1"/>
</dbReference>
<dbReference type="HAMAP" id="MF_00051">
    <property type="entry name" value="SHMT"/>
    <property type="match status" value="1"/>
</dbReference>
<dbReference type="InterPro" id="IPR015424">
    <property type="entry name" value="PyrdxlP-dep_Trfase"/>
</dbReference>
<dbReference type="InterPro" id="IPR015421">
    <property type="entry name" value="PyrdxlP-dep_Trfase_major"/>
</dbReference>
<dbReference type="InterPro" id="IPR015422">
    <property type="entry name" value="PyrdxlP-dep_Trfase_small"/>
</dbReference>
<dbReference type="InterPro" id="IPR001085">
    <property type="entry name" value="Ser_HO-MeTrfase"/>
</dbReference>
<dbReference type="InterPro" id="IPR049943">
    <property type="entry name" value="Ser_HO-MeTrfase-like"/>
</dbReference>
<dbReference type="InterPro" id="IPR019798">
    <property type="entry name" value="Ser_HO-MeTrfase_PLP_BS"/>
</dbReference>
<dbReference type="InterPro" id="IPR039429">
    <property type="entry name" value="SHMT-like_dom"/>
</dbReference>
<dbReference type="NCBIfam" id="NF000586">
    <property type="entry name" value="PRK00011.1"/>
    <property type="match status" value="1"/>
</dbReference>
<dbReference type="PANTHER" id="PTHR11680">
    <property type="entry name" value="SERINE HYDROXYMETHYLTRANSFERASE"/>
    <property type="match status" value="1"/>
</dbReference>
<dbReference type="PANTHER" id="PTHR11680:SF59">
    <property type="entry name" value="SERINE HYDROXYMETHYLTRANSFERASE, CYTOSOLIC"/>
    <property type="match status" value="1"/>
</dbReference>
<dbReference type="Pfam" id="PF00464">
    <property type="entry name" value="SHMT"/>
    <property type="match status" value="1"/>
</dbReference>
<dbReference type="PIRSF" id="PIRSF000412">
    <property type="entry name" value="SHMT"/>
    <property type="match status" value="1"/>
</dbReference>
<dbReference type="SUPFAM" id="SSF53383">
    <property type="entry name" value="PLP-dependent transferases"/>
    <property type="match status" value="1"/>
</dbReference>
<dbReference type="PROSITE" id="PS00096">
    <property type="entry name" value="SHMT"/>
    <property type="match status" value="1"/>
</dbReference>
<keyword id="KW-0554">One-carbon metabolism</keyword>
<keyword id="KW-0663">Pyridoxal phosphate</keyword>
<keyword id="KW-1185">Reference proteome</keyword>
<keyword id="KW-0808">Transferase</keyword>
<protein>
    <recommendedName>
        <fullName>Serine hydroxymethyltransferase</fullName>
        <shortName>SHMT</shortName>
        <ecNumber>2.1.2.1</ecNumber>
    </recommendedName>
    <alternativeName>
        <fullName>Glycine hydroxymethyltransferase</fullName>
    </alternativeName>
    <alternativeName>
        <fullName>Maternal effect lethal protein 32</fullName>
    </alternativeName>
    <alternativeName>
        <fullName>Serine methylase</fullName>
    </alternativeName>
</protein>
<name>GLYC_CAEBR</name>
<accession>Q60V73</accession>
<accession>A8XW58</accession>
<organism>
    <name type="scientific">Caenorhabditis briggsae</name>
    <dbReference type="NCBI Taxonomy" id="6238"/>
    <lineage>
        <taxon>Eukaryota</taxon>
        <taxon>Metazoa</taxon>
        <taxon>Ecdysozoa</taxon>
        <taxon>Nematoda</taxon>
        <taxon>Chromadorea</taxon>
        <taxon>Rhabditida</taxon>
        <taxon>Rhabditina</taxon>
        <taxon>Rhabditomorpha</taxon>
        <taxon>Rhabditoidea</taxon>
        <taxon>Rhabditidae</taxon>
        <taxon>Peloderinae</taxon>
        <taxon>Caenorhabditis</taxon>
    </lineage>
</organism>
<feature type="chain" id="PRO_0000282955" description="Serine hydroxymethyltransferase">
    <location>
        <begin position="1"/>
        <end position="511"/>
    </location>
</feature>
<feature type="modified residue" description="N6-(pyridoxal phosphate)lysine" evidence="1">
    <location>
        <position position="287"/>
    </location>
</feature>
<comment type="function">
    <text evidence="1 5">Interconversion of serine and glycine.</text>
</comment>
<comment type="catalytic activity">
    <reaction evidence="5">
        <text>(6R)-5,10-methylene-5,6,7,8-tetrahydrofolate + glycine + H2O = (6S)-5,6,7,8-tetrahydrofolate + L-serine</text>
        <dbReference type="Rhea" id="RHEA:15481"/>
        <dbReference type="ChEBI" id="CHEBI:15377"/>
        <dbReference type="ChEBI" id="CHEBI:15636"/>
        <dbReference type="ChEBI" id="CHEBI:33384"/>
        <dbReference type="ChEBI" id="CHEBI:57305"/>
        <dbReference type="ChEBI" id="CHEBI:57453"/>
        <dbReference type="EC" id="2.1.2.1"/>
    </reaction>
</comment>
<comment type="cofactor">
    <cofactor evidence="2">
        <name>pyridoxal 5'-phosphate</name>
        <dbReference type="ChEBI" id="CHEBI:597326"/>
    </cofactor>
</comment>
<comment type="pathway">
    <text>One-carbon metabolism; tetrahydrofolate interconversion.</text>
</comment>
<comment type="subunit">
    <text evidence="2">Homotetramer.</text>
</comment>
<comment type="similarity">
    <text evidence="4">Belongs to the SHMT family.</text>
</comment>
<gene>
    <name evidence="3" type="primary">mel-32</name>
    <name type="ORF">CBG19673</name>
</gene>
<proteinExistence type="inferred from homology"/>